<reference key="1">
    <citation type="submission" date="1995-12" db="EMBL/GenBank/DDBJ databases">
        <authorList>
            <person name="Dunn J.J."/>
            <person name="Butler-Loffredo L."/>
            <person name="Kieleczawa J."/>
            <person name="Medalle J."/>
            <person name="Luft B.J."/>
        </authorList>
    </citation>
    <scope>NUCLEOTIDE SEQUENCE [GENOMIC DNA]</scope>
    <source>
        <strain>ATCC 35210 / DSM 4680 / CIP 102532 / B31</strain>
    </source>
</reference>
<reference key="2">
    <citation type="submission" date="1996-02" db="EMBL/GenBank/DDBJ databases">
        <title>Identification of a major Borrelia burgdorferi motility operon, which is transcribed by a sigma70-like promoter.</title>
        <authorList>
            <person name="Ge Y."/>
            <person name="Saint-Girons I."/>
            <person name="Old I.G."/>
            <person name="Charon N.W."/>
        </authorList>
    </citation>
    <scope>NUCLEOTIDE SEQUENCE [GENOMIC DNA]</scope>
    <source>
        <strain>212</strain>
    </source>
</reference>
<reference key="3">
    <citation type="submission" date="1996-03" db="EMBL/GenBank/DDBJ databases">
        <authorList>
            <person name="Ge Y."/>
            <person name="Old I.G."/>
            <person name="Saint-Girons I."/>
            <person name="Charon N."/>
        </authorList>
    </citation>
    <scope>NUCLEOTIDE SEQUENCE [GENOMIC DNA]</scope>
    <source>
        <strain>212</strain>
    </source>
</reference>
<reference key="4">
    <citation type="journal article" date="1997" name="Nature">
        <title>Genomic sequence of a Lyme disease spirochaete, Borrelia burgdorferi.</title>
        <authorList>
            <person name="Fraser C.M."/>
            <person name="Casjens S."/>
            <person name="Huang W.M."/>
            <person name="Sutton G.G."/>
            <person name="Clayton R.A."/>
            <person name="Lathigra R."/>
            <person name="White O."/>
            <person name="Ketchum K.A."/>
            <person name="Dodson R.J."/>
            <person name="Hickey E.K."/>
            <person name="Gwinn M.L."/>
            <person name="Dougherty B.A."/>
            <person name="Tomb J.-F."/>
            <person name="Fleischmann R.D."/>
            <person name="Richardson D.L."/>
            <person name="Peterson J.D."/>
            <person name="Kerlavage A.R."/>
            <person name="Quackenbush J."/>
            <person name="Salzberg S.L."/>
            <person name="Hanson M."/>
            <person name="van Vugt R."/>
            <person name="Palmer N."/>
            <person name="Adams M.D."/>
            <person name="Gocayne J.D."/>
            <person name="Weidman J.F."/>
            <person name="Utterback T.R."/>
            <person name="Watthey L."/>
            <person name="McDonald L.A."/>
            <person name="Artiach P."/>
            <person name="Bowman C."/>
            <person name="Garland S.A."/>
            <person name="Fujii C."/>
            <person name="Cotton M.D."/>
            <person name="Horst K."/>
            <person name="Roberts K.M."/>
            <person name="Hatch B."/>
            <person name="Smith H.O."/>
            <person name="Venter J.C."/>
        </authorList>
    </citation>
    <scope>NUCLEOTIDE SEQUENCE [LARGE SCALE GENOMIC DNA]</scope>
    <source>
        <strain>ATCC 35210 / DSM 4680 / CIP 102532 / B31</strain>
    </source>
</reference>
<gene>
    <name type="ordered locus">BB_0298</name>
</gene>
<accession>Q57105</accession>
<protein>
    <recommendedName>
        <fullName>TPR repeat-containing protein BB_0298</fullName>
    </recommendedName>
</protein>
<dbReference type="EMBL" id="X96685">
    <property type="protein sequence ID" value="CAA65465.1"/>
    <property type="molecule type" value="Genomic_DNA"/>
</dbReference>
<dbReference type="EMBL" id="U43739">
    <property type="protein sequence ID" value="AAA85621.1"/>
    <property type="molecule type" value="Genomic_DNA"/>
</dbReference>
<dbReference type="EMBL" id="L76303">
    <property type="protein sequence ID" value="AAB51403.1"/>
    <property type="molecule type" value="Genomic_DNA"/>
</dbReference>
<dbReference type="EMBL" id="AE000783">
    <property type="protein sequence ID" value="AAC66650.1"/>
    <property type="molecule type" value="Genomic_DNA"/>
</dbReference>
<dbReference type="PIR" id="B70137">
    <property type="entry name" value="B70137"/>
</dbReference>
<dbReference type="RefSeq" id="NP_212432.1">
    <property type="nucleotide sequence ID" value="NC_001318.1"/>
</dbReference>
<dbReference type="RefSeq" id="WP_002556897.1">
    <property type="nucleotide sequence ID" value="NC_001318.1"/>
</dbReference>
<dbReference type="SMR" id="Q57105"/>
<dbReference type="STRING" id="224326.BB_0298"/>
<dbReference type="PaxDb" id="224326-BB_0298"/>
<dbReference type="EnsemblBacteria" id="AAC66650">
    <property type="protein sequence ID" value="AAC66650"/>
    <property type="gene ID" value="BB_0298"/>
</dbReference>
<dbReference type="KEGG" id="bbu:BB_0298"/>
<dbReference type="PATRIC" id="fig|224326.49.peg.697"/>
<dbReference type="HOGENOM" id="CLU_1202914_0_0_12"/>
<dbReference type="OrthoDB" id="350322at2"/>
<dbReference type="Proteomes" id="UP000001807">
    <property type="component" value="Chromosome"/>
</dbReference>
<dbReference type="Gene3D" id="1.25.40.10">
    <property type="entry name" value="Tetratricopeptide repeat domain"/>
    <property type="match status" value="1"/>
</dbReference>
<dbReference type="InterPro" id="IPR011990">
    <property type="entry name" value="TPR-like_helical_dom_sf"/>
</dbReference>
<dbReference type="InterPro" id="IPR019734">
    <property type="entry name" value="TPR_rpt"/>
</dbReference>
<dbReference type="Pfam" id="PF00515">
    <property type="entry name" value="TPR_1"/>
    <property type="match status" value="1"/>
</dbReference>
<dbReference type="SMART" id="SM00028">
    <property type="entry name" value="TPR"/>
    <property type="match status" value="2"/>
</dbReference>
<dbReference type="SUPFAM" id="SSF48452">
    <property type="entry name" value="TPR-like"/>
    <property type="match status" value="1"/>
</dbReference>
<dbReference type="PROSITE" id="PS50005">
    <property type="entry name" value="TPR"/>
    <property type="match status" value="2"/>
</dbReference>
<dbReference type="PROSITE" id="PS50293">
    <property type="entry name" value="TPR_REGION"/>
    <property type="match status" value="2"/>
</dbReference>
<feature type="chain" id="PRO_0000106450" description="TPR repeat-containing protein BB_0298">
    <location>
        <begin position="1"/>
        <end position="230"/>
    </location>
</feature>
<feature type="repeat" description="TPR 1">
    <location>
        <begin position="69"/>
        <end position="102"/>
    </location>
</feature>
<feature type="repeat" description="TPR 2">
    <location>
        <begin position="183"/>
        <end position="216"/>
    </location>
</feature>
<name>Y298_BORBU</name>
<organism>
    <name type="scientific">Borreliella burgdorferi (strain ATCC 35210 / DSM 4680 / CIP 102532 / B31)</name>
    <name type="common">Borrelia burgdorferi</name>
    <dbReference type="NCBI Taxonomy" id="224326"/>
    <lineage>
        <taxon>Bacteria</taxon>
        <taxon>Pseudomonadati</taxon>
        <taxon>Spirochaetota</taxon>
        <taxon>Spirochaetia</taxon>
        <taxon>Spirochaetales</taxon>
        <taxon>Borreliaceae</taxon>
        <taxon>Borreliella</taxon>
    </lineage>
</organism>
<keyword id="KW-1185">Reference proteome</keyword>
<keyword id="KW-0677">Repeat</keyword>
<keyword id="KW-0802">TPR repeat</keyword>
<sequence>MKILWLIILVNLFLSCGNESKEKSNLGLRLRELEISGGGSESKIEVYKEFIEKEDKNILKIVNSIDKKARFFNLIGLEFFKLGQYGPAIEYFAKNLEINPNNYLSHFYIGVASYNLAKNLRVKDEVEKYIILAENSFLKSLSIRDDFKDSLFAISNMYVYDLDKQLEAKNYLNKLGDMGEDYFEFLMLRGANYYSLGDLGNAILFYDKASKKASTEEQKEGVSRIMSNLK</sequence>
<proteinExistence type="predicted"/>